<accession>B9KXN9</accession>
<dbReference type="EC" id="2.1.1.228" evidence="1"/>
<dbReference type="EMBL" id="CP001275">
    <property type="protein sequence ID" value="ACM05891.1"/>
    <property type="molecule type" value="Genomic_DNA"/>
</dbReference>
<dbReference type="RefSeq" id="WP_012641639.1">
    <property type="nucleotide sequence ID" value="NC_011959.1"/>
</dbReference>
<dbReference type="SMR" id="B9KXN9"/>
<dbReference type="STRING" id="309801.trd_0226"/>
<dbReference type="KEGG" id="tro:trd_0226"/>
<dbReference type="eggNOG" id="COG0336">
    <property type="taxonomic scope" value="Bacteria"/>
</dbReference>
<dbReference type="HOGENOM" id="CLU_047363_0_1_0"/>
<dbReference type="OrthoDB" id="9807416at2"/>
<dbReference type="Proteomes" id="UP000000447">
    <property type="component" value="Chromosome"/>
</dbReference>
<dbReference type="GO" id="GO:0005829">
    <property type="term" value="C:cytosol"/>
    <property type="evidence" value="ECO:0007669"/>
    <property type="project" value="TreeGrafter"/>
</dbReference>
<dbReference type="GO" id="GO:0052906">
    <property type="term" value="F:tRNA (guanine(37)-N1)-methyltransferase activity"/>
    <property type="evidence" value="ECO:0007669"/>
    <property type="project" value="UniProtKB-UniRule"/>
</dbReference>
<dbReference type="GO" id="GO:0002939">
    <property type="term" value="P:tRNA N1-guanine methylation"/>
    <property type="evidence" value="ECO:0007669"/>
    <property type="project" value="TreeGrafter"/>
</dbReference>
<dbReference type="CDD" id="cd18080">
    <property type="entry name" value="TrmD-like"/>
    <property type="match status" value="1"/>
</dbReference>
<dbReference type="FunFam" id="1.10.1270.20:FF:000001">
    <property type="entry name" value="tRNA (guanine-N(1)-)-methyltransferase"/>
    <property type="match status" value="1"/>
</dbReference>
<dbReference type="FunFam" id="3.40.1280.10:FF:000001">
    <property type="entry name" value="tRNA (guanine-N(1)-)-methyltransferase"/>
    <property type="match status" value="1"/>
</dbReference>
<dbReference type="Gene3D" id="3.40.1280.10">
    <property type="match status" value="1"/>
</dbReference>
<dbReference type="Gene3D" id="1.10.1270.20">
    <property type="entry name" value="tRNA(m1g37)methyltransferase, domain 2"/>
    <property type="match status" value="1"/>
</dbReference>
<dbReference type="HAMAP" id="MF_00605">
    <property type="entry name" value="TrmD"/>
    <property type="match status" value="1"/>
</dbReference>
<dbReference type="InterPro" id="IPR029028">
    <property type="entry name" value="Alpha/beta_knot_MTases"/>
</dbReference>
<dbReference type="InterPro" id="IPR023148">
    <property type="entry name" value="tRNA_m1G_MeTrfase_C_sf"/>
</dbReference>
<dbReference type="InterPro" id="IPR002649">
    <property type="entry name" value="tRNA_m1G_MeTrfase_TrmD"/>
</dbReference>
<dbReference type="InterPro" id="IPR029026">
    <property type="entry name" value="tRNA_m1G_MTases_N"/>
</dbReference>
<dbReference type="InterPro" id="IPR016009">
    <property type="entry name" value="tRNA_MeTrfase_TRMD/TRM10"/>
</dbReference>
<dbReference type="NCBIfam" id="NF000648">
    <property type="entry name" value="PRK00026.1"/>
    <property type="match status" value="1"/>
</dbReference>
<dbReference type="NCBIfam" id="TIGR00088">
    <property type="entry name" value="trmD"/>
    <property type="match status" value="1"/>
</dbReference>
<dbReference type="PANTHER" id="PTHR46417">
    <property type="entry name" value="TRNA (GUANINE-N(1)-)-METHYLTRANSFERASE"/>
    <property type="match status" value="1"/>
</dbReference>
<dbReference type="PANTHER" id="PTHR46417:SF1">
    <property type="entry name" value="TRNA (GUANINE-N(1)-)-METHYLTRANSFERASE"/>
    <property type="match status" value="1"/>
</dbReference>
<dbReference type="Pfam" id="PF01746">
    <property type="entry name" value="tRNA_m1G_MT"/>
    <property type="match status" value="1"/>
</dbReference>
<dbReference type="PIRSF" id="PIRSF000386">
    <property type="entry name" value="tRNA_mtase"/>
    <property type="match status" value="1"/>
</dbReference>
<dbReference type="SUPFAM" id="SSF75217">
    <property type="entry name" value="alpha/beta knot"/>
    <property type="match status" value="1"/>
</dbReference>
<gene>
    <name evidence="1" type="primary">trmD</name>
    <name type="ordered locus">trd_0226</name>
</gene>
<organism>
    <name type="scientific">Thermomicrobium roseum (strain ATCC 27502 / DSM 5159 / P-2)</name>
    <dbReference type="NCBI Taxonomy" id="309801"/>
    <lineage>
        <taxon>Bacteria</taxon>
        <taxon>Pseudomonadati</taxon>
        <taxon>Thermomicrobiota</taxon>
        <taxon>Thermomicrobia</taxon>
        <taxon>Thermomicrobiales</taxon>
        <taxon>Thermomicrobiaceae</taxon>
        <taxon>Thermomicrobium</taxon>
    </lineage>
</organism>
<feature type="chain" id="PRO_1000198592" description="tRNA (guanine-N(1)-)-methyltransferase">
    <location>
        <begin position="1"/>
        <end position="268"/>
    </location>
</feature>
<feature type="region of interest" description="Disordered" evidence="2">
    <location>
        <begin position="238"/>
        <end position="268"/>
    </location>
</feature>
<feature type="binding site" evidence="1">
    <location>
        <position position="113"/>
    </location>
    <ligand>
        <name>S-adenosyl-L-methionine</name>
        <dbReference type="ChEBI" id="CHEBI:59789"/>
    </ligand>
</feature>
<feature type="binding site" evidence="1">
    <location>
        <begin position="133"/>
        <end position="138"/>
    </location>
    <ligand>
        <name>S-adenosyl-L-methionine</name>
        <dbReference type="ChEBI" id="CHEBI:59789"/>
    </ligand>
</feature>
<proteinExistence type="inferred from homology"/>
<name>TRMD_THERP</name>
<reference key="1">
    <citation type="journal article" date="2009" name="PLoS ONE">
        <title>Complete genome sequence of the aerobic CO-oxidizing thermophile Thermomicrobium roseum.</title>
        <authorList>
            <person name="Wu D."/>
            <person name="Raymond J."/>
            <person name="Wu M."/>
            <person name="Chatterji S."/>
            <person name="Ren Q."/>
            <person name="Graham J.E."/>
            <person name="Bryant D.A."/>
            <person name="Robb F."/>
            <person name="Colman A."/>
            <person name="Tallon L.J."/>
            <person name="Badger J.H."/>
            <person name="Madupu R."/>
            <person name="Ward N.L."/>
            <person name="Eisen J.A."/>
        </authorList>
    </citation>
    <scope>NUCLEOTIDE SEQUENCE [LARGE SCALE GENOMIC DNA]</scope>
    <source>
        <strain>ATCC 27502 / DSM 5159 / P-2</strain>
    </source>
</reference>
<protein>
    <recommendedName>
        <fullName evidence="1">tRNA (guanine-N(1)-)-methyltransferase</fullName>
        <ecNumber evidence="1">2.1.1.228</ecNumber>
    </recommendedName>
    <alternativeName>
        <fullName evidence="1">M1G-methyltransferase</fullName>
    </alternativeName>
    <alternativeName>
        <fullName evidence="1">tRNA [GM37] methyltransferase</fullName>
    </alternativeName>
</protein>
<evidence type="ECO:0000255" key="1">
    <source>
        <dbReference type="HAMAP-Rule" id="MF_00605"/>
    </source>
</evidence>
<evidence type="ECO:0000256" key="2">
    <source>
        <dbReference type="SAM" id="MobiDB-lite"/>
    </source>
</evidence>
<keyword id="KW-0963">Cytoplasm</keyword>
<keyword id="KW-0489">Methyltransferase</keyword>
<keyword id="KW-1185">Reference proteome</keyword>
<keyword id="KW-0949">S-adenosyl-L-methionine</keyword>
<keyword id="KW-0808">Transferase</keyword>
<keyword id="KW-0819">tRNA processing</keyword>
<sequence length="268" mass="29602">MRFDVFTIFPGMFTGFLTESILKRAQQAGLIEIAIHNIRDWTTDKHRTVDDTPYGGGPGMVMMAPPIVHAVESVLGQEQNSTPIIIMSPSGELFTQDIARQLACFPRLALICGRYEGIDDRVRIILRARELSIGDYVLTGGELAAAVVIDVVSRLVPGVIDPESLAEESHNSGLLEYPQYTRPPIFRGLGVPEILLSGNHAKIAEWRRMMALCRTAARRPDLLARAALTPRDHELLQRCPPDPFAHQGPVYEGDQLERPEGGEQGASR</sequence>
<comment type="function">
    <text evidence="1">Specifically methylates guanosine-37 in various tRNAs.</text>
</comment>
<comment type="catalytic activity">
    <reaction evidence="1">
        <text>guanosine(37) in tRNA + S-adenosyl-L-methionine = N(1)-methylguanosine(37) in tRNA + S-adenosyl-L-homocysteine + H(+)</text>
        <dbReference type="Rhea" id="RHEA:36899"/>
        <dbReference type="Rhea" id="RHEA-COMP:10145"/>
        <dbReference type="Rhea" id="RHEA-COMP:10147"/>
        <dbReference type="ChEBI" id="CHEBI:15378"/>
        <dbReference type="ChEBI" id="CHEBI:57856"/>
        <dbReference type="ChEBI" id="CHEBI:59789"/>
        <dbReference type="ChEBI" id="CHEBI:73542"/>
        <dbReference type="ChEBI" id="CHEBI:74269"/>
        <dbReference type="EC" id="2.1.1.228"/>
    </reaction>
</comment>
<comment type="subunit">
    <text evidence="1">Homodimer.</text>
</comment>
<comment type="subcellular location">
    <subcellularLocation>
        <location evidence="1">Cytoplasm</location>
    </subcellularLocation>
</comment>
<comment type="similarity">
    <text evidence="1">Belongs to the RNA methyltransferase TrmD family.</text>
</comment>